<feature type="chain" id="PRO_0000122015" description="Serine--tRNA ligase">
    <location>
        <begin position="1"/>
        <end position="443"/>
    </location>
</feature>
<feature type="binding site" evidence="1">
    <location>
        <begin position="246"/>
        <end position="248"/>
    </location>
    <ligand>
        <name>L-serine</name>
        <dbReference type="ChEBI" id="CHEBI:33384"/>
    </ligand>
</feature>
<feature type="binding site" evidence="1">
    <location>
        <begin position="277"/>
        <end position="279"/>
    </location>
    <ligand>
        <name>ATP</name>
        <dbReference type="ChEBI" id="CHEBI:30616"/>
    </ligand>
</feature>
<feature type="binding site" evidence="1">
    <location>
        <position position="300"/>
    </location>
    <ligand>
        <name>L-serine</name>
        <dbReference type="ChEBI" id="CHEBI:33384"/>
    </ligand>
</feature>
<feature type="binding site" evidence="1">
    <location>
        <begin position="367"/>
        <end position="370"/>
    </location>
    <ligand>
        <name>ATP</name>
        <dbReference type="ChEBI" id="CHEBI:30616"/>
    </ligand>
</feature>
<feature type="binding site" evidence="1">
    <location>
        <position position="402"/>
    </location>
    <ligand>
        <name>L-serine</name>
        <dbReference type="ChEBI" id="CHEBI:33384"/>
    </ligand>
</feature>
<accession>Q89L00</accession>
<proteinExistence type="inferred from homology"/>
<name>SYS_BRADU</name>
<gene>
    <name evidence="1" type="primary">serS</name>
    <name type="ordered locus">bll4748</name>
</gene>
<organism>
    <name type="scientific">Bradyrhizobium diazoefficiens (strain JCM 10833 / BCRC 13528 / IAM 13628 / NBRC 14792 / USDA 110)</name>
    <dbReference type="NCBI Taxonomy" id="224911"/>
    <lineage>
        <taxon>Bacteria</taxon>
        <taxon>Pseudomonadati</taxon>
        <taxon>Pseudomonadota</taxon>
        <taxon>Alphaproteobacteria</taxon>
        <taxon>Hyphomicrobiales</taxon>
        <taxon>Nitrobacteraceae</taxon>
        <taxon>Bradyrhizobium</taxon>
    </lineage>
</organism>
<sequence length="443" mass="48717">MHDIKSIRDNPQAFDAGLARRGLKPLSASLLAIDERRRAAILASEQAQARRNAASKEIGDAKKAKDEARAATLMAEVAELKTTMPQLEAAAKAADEELTKELSAIPNIPFDEVPDGVDEHGNVQHHVFGNKRNYGFAPKLHDDLGNALGYMDFEAAAKLSGARFVVLKKGLARLERAIGQFMLDLHTTEHGYTEINPPLLVRNEVMFGTGQLPKFEDDQFWAIKGELLASPDHERLKTERLGLIPTAEVSLTNLARESILDEKQLPMRLTALTPCFRAEAGAAGRDTRGMIRQHQFTKVELVSITTPEASKDELERMLSCAEQVLQKLDLHYRVMTLCAGDMGFSSQKTYDIEVWMPGQGDGGMFREISSCSVCGDFQARRMDARSRGPDGKPRFVHTLNGSGTAVGRALIAVMETYQQEDGSIAVPSVLQPYMGGLKVISRD</sequence>
<reference key="1">
    <citation type="journal article" date="2002" name="DNA Res.">
        <title>Complete genomic sequence of nitrogen-fixing symbiotic bacterium Bradyrhizobium japonicum USDA110.</title>
        <authorList>
            <person name="Kaneko T."/>
            <person name="Nakamura Y."/>
            <person name="Sato S."/>
            <person name="Minamisawa K."/>
            <person name="Uchiumi T."/>
            <person name="Sasamoto S."/>
            <person name="Watanabe A."/>
            <person name="Idesawa K."/>
            <person name="Iriguchi M."/>
            <person name="Kawashima K."/>
            <person name="Kohara M."/>
            <person name="Matsumoto M."/>
            <person name="Shimpo S."/>
            <person name="Tsuruoka H."/>
            <person name="Wada T."/>
            <person name="Yamada M."/>
            <person name="Tabata S."/>
        </authorList>
    </citation>
    <scope>NUCLEOTIDE SEQUENCE [LARGE SCALE GENOMIC DNA]</scope>
    <source>
        <strain>JCM 10833 / BCRC 13528 / IAM 13628 / NBRC 14792 / USDA 110</strain>
    </source>
</reference>
<dbReference type="EC" id="6.1.1.11" evidence="1"/>
<dbReference type="EMBL" id="BA000040">
    <property type="protein sequence ID" value="BAC50013.1"/>
    <property type="molecule type" value="Genomic_DNA"/>
</dbReference>
<dbReference type="RefSeq" id="NP_771388.1">
    <property type="nucleotide sequence ID" value="NC_004463.1"/>
</dbReference>
<dbReference type="RefSeq" id="WP_011087516.1">
    <property type="nucleotide sequence ID" value="NC_004463.1"/>
</dbReference>
<dbReference type="SMR" id="Q89L00"/>
<dbReference type="FunCoup" id="Q89L00">
    <property type="interactions" value="671"/>
</dbReference>
<dbReference type="STRING" id="224911.AAV28_21030"/>
<dbReference type="EnsemblBacteria" id="BAC50013">
    <property type="protein sequence ID" value="BAC50013"/>
    <property type="gene ID" value="BAC50013"/>
</dbReference>
<dbReference type="GeneID" id="46491755"/>
<dbReference type="KEGG" id="bja:bll4748"/>
<dbReference type="PATRIC" id="fig|224911.44.peg.4581"/>
<dbReference type="eggNOG" id="COG0172">
    <property type="taxonomic scope" value="Bacteria"/>
</dbReference>
<dbReference type="HOGENOM" id="CLU_023797_1_1_5"/>
<dbReference type="InParanoid" id="Q89L00"/>
<dbReference type="OrthoDB" id="9804647at2"/>
<dbReference type="PhylomeDB" id="Q89L00"/>
<dbReference type="UniPathway" id="UPA00906">
    <property type="reaction ID" value="UER00895"/>
</dbReference>
<dbReference type="Proteomes" id="UP000002526">
    <property type="component" value="Chromosome"/>
</dbReference>
<dbReference type="GO" id="GO:0005737">
    <property type="term" value="C:cytoplasm"/>
    <property type="evidence" value="ECO:0007669"/>
    <property type="project" value="UniProtKB-SubCell"/>
</dbReference>
<dbReference type="GO" id="GO:0005524">
    <property type="term" value="F:ATP binding"/>
    <property type="evidence" value="ECO:0007669"/>
    <property type="project" value="UniProtKB-UniRule"/>
</dbReference>
<dbReference type="GO" id="GO:0004828">
    <property type="term" value="F:serine-tRNA ligase activity"/>
    <property type="evidence" value="ECO:0007669"/>
    <property type="project" value="UniProtKB-UniRule"/>
</dbReference>
<dbReference type="GO" id="GO:0016260">
    <property type="term" value="P:selenocysteine biosynthetic process"/>
    <property type="evidence" value="ECO:0007669"/>
    <property type="project" value="UniProtKB-UniRule"/>
</dbReference>
<dbReference type="GO" id="GO:0006434">
    <property type="term" value="P:seryl-tRNA aminoacylation"/>
    <property type="evidence" value="ECO:0007669"/>
    <property type="project" value="UniProtKB-UniRule"/>
</dbReference>
<dbReference type="CDD" id="cd00770">
    <property type="entry name" value="SerRS_core"/>
    <property type="match status" value="1"/>
</dbReference>
<dbReference type="Gene3D" id="3.30.930.10">
    <property type="entry name" value="Bira Bifunctional Protein, Domain 2"/>
    <property type="match status" value="1"/>
</dbReference>
<dbReference type="Gene3D" id="1.10.287.40">
    <property type="entry name" value="Serine-tRNA synthetase, tRNA binding domain"/>
    <property type="match status" value="1"/>
</dbReference>
<dbReference type="HAMAP" id="MF_00176">
    <property type="entry name" value="Ser_tRNA_synth_type1"/>
    <property type="match status" value="1"/>
</dbReference>
<dbReference type="InterPro" id="IPR002314">
    <property type="entry name" value="aa-tRNA-synt_IIb"/>
</dbReference>
<dbReference type="InterPro" id="IPR006195">
    <property type="entry name" value="aa-tRNA-synth_II"/>
</dbReference>
<dbReference type="InterPro" id="IPR045864">
    <property type="entry name" value="aa-tRNA-synth_II/BPL/LPL"/>
</dbReference>
<dbReference type="InterPro" id="IPR002317">
    <property type="entry name" value="Ser-tRNA-ligase_type_1"/>
</dbReference>
<dbReference type="InterPro" id="IPR015866">
    <property type="entry name" value="Ser-tRNA-synth_1_N"/>
</dbReference>
<dbReference type="InterPro" id="IPR042103">
    <property type="entry name" value="SerRS_1_N_sf"/>
</dbReference>
<dbReference type="InterPro" id="IPR033729">
    <property type="entry name" value="SerRS_core"/>
</dbReference>
<dbReference type="InterPro" id="IPR010978">
    <property type="entry name" value="tRNA-bd_arm"/>
</dbReference>
<dbReference type="NCBIfam" id="TIGR00414">
    <property type="entry name" value="serS"/>
    <property type="match status" value="1"/>
</dbReference>
<dbReference type="PANTHER" id="PTHR43697:SF1">
    <property type="entry name" value="SERINE--TRNA LIGASE"/>
    <property type="match status" value="1"/>
</dbReference>
<dbReference type="PANTHER" id="PTHR43697">
    <property type="entry name" value="SERYL-TRNA SYNTHETASE"/>
    <property type="match status" value="1"/>
</dbReference>
<dbReference type="Pfam" id="PF02403">
    <property type="entry name" value="Seryl_tRNA_N"/>
    <property type="match status" value="1"/>
</dbReference>
<dbReference type="Pfam" id="PF00587">
    <property type="entry name" value="tRNA-synt_2b"/>
    <property type="match status" value="1"/>
</dbReference>
<dbReference type="PIRSF" id="PIRSF001529">
    <property type="entry name" value="Ser-tRNA-synth_IIa"/>
    <property type="match status" value="1"/>
</dbReference>
<dbReference type="PRINTS" id="PR00981">
    <property type="entry name" value="TRNASYNTHSER"/>
</dbReference>
<dbReference type="SUPFAM" id="SSF55681">
    <property type="entry name" value="Class II aaRS and biotin synthetases"/>
    <property type="match status" value="1"/>
</dbReference>
<dbReference type="SUPFAM" id="SSF46589">
    <property type="entry name" value="tRNA-binding arm"/>
    <property type="match status" value="1"/>
</dbReference>
<dbReference type="PROSITE" id="PS50862">
    <property type="entry name" value="AA_TRNA_LIGASE_II"/>
    <property type="match status" value="1"/>
</dbReference>
<comment type="function">
    <text evidence="1">Catalyzes the attachment of serine to tRNA(Ser). Is also able to aminoacylate tRNA(Sec) with serine, to form the misacylated tRNA L-seryl-tRNA(Sec), which will be further converted into selenocysteinyl-tRNA(Sec).</text>
</comment>
<comment type="catalytic activity">
    <reaction evidence="1">
        <text>tRNA(Ser) + L-serine + ATP = L-seryl-tRNA(Ser) + AMP + diphosphate + H(+)</text>
        <dbReference type="Rhea" id="RHEA:12292"/>
        <dbReference type="Rhea" id="RHEA-COMP:9669"/>
        <dbReference type="Rhea" id="RHEA-COMP:9703"/>
        <dbReference type="ChEBI" id="CHEBI:15378"/>
        <dbReference type="ChEBI" id="CHEBI:30616"/>
        <dbReference type="ChEBI" id="CHEBI:33019"/>
        <dbReference type="ChEBI" id="CHEBI:33384"/>
        <dbReference type="ChEBI" id="CHEBI:78442"/>
        <dbReference type="ChEBI" id="CHEBI:78533"/>
        <dbReference type="ChEBI" id="CHEBI:456215"/>
        <dbReference type="EC" id="6.1.1.11"/>
    </reaction>
</comment>
<comment type="catalytic activity">
    <reaction evidence="1">
        <text>tRNA(Sec) + L-serine + ATP = L-seryl-tRNA(Sec) + AMP + diphosphate + H(+)</text>
        <dbReference type="Rhea" id="RHEA:42580"/>
        <dbReference type="Rhea" id="RHEA-COMP:9742"/>
        <dbReference type="Rhea" id="RHEA-COMP:10128"/>
        <dbReference type="ChEBI" id="CHEBI:15378"/>
        <dbReference type="ChEBI" id="CHEBI:30616"/>
        <dbReference type="ChEBI" id="CHEBI:33019"/>
        <dbReference type="ChEBI" id="CHEBI:33384"/>
        <dbReference type="ChEBI" id="CHEBI:78442"/>
        <dbReference type="ChEBI" id="CHEBI:78533"/>
        <dbReference type="ChEBI" id="CHEBI:456215"/>
        <dbReference type="EC" id="6.1.1.11"/>
    </reaction>
</comment>
<comment type="pathway">
    <text evidence="1">Aminoacyl-tRNA biosynthesis; selenocysteinyl-tRNA(Sec) biosynthesis; L-seryl-tRNA(Sec) from L-serine and tRNA(Sec): step 1/1.</text>
</comment>
<comment type="subunit">
    <text evidence="1">Homodimer. The tRNA molecule binds across the dimer.</text>
</comment>
<comment type="subcellular location">
    <subcellularLocation>
        <location evidence="1">Cytoplasm</location>
    </subcellularLocation>
</comment>
<comment type="domain">
    <text evidence="1">Consists of two distinct domains, a catalytic core and a N-terminal extension that is involved in tRNA binding.</text>
</comment>
<comment type="similarity">
    <text evidence="1">Belongs to the class-II aminoacyl-tRNA synthetase family. Type-1 seryl-tRNA synthetase subfamily.</text>
</comment>
<protein>
    <recommendedName>
        <fullName evidence="1">Serine--tRNA ligase</fullName>
        <ecNumber evidence="1">6.1.1.11</ecNumber>
    </recommendedName>
    <alternativeName>
        <fullName evidence="1">Seryl-tRNA synthetase</fullName>
        <shortName evidence="1">SerRS</shortName>
    </alternativeName>
    <alternativeName>
        <fullName evidence="1">Seryl-tRNA(Ser/Sec) synthetase</fullName>
    </alternativeName>
</protein>
<evidence type="ECO:0000255" key="1">
    <source>
        <dbReference type="HAMAP-Rule" id="MF_00176"/>
    </source>
</evidence>
<keyword id="KW-0030">Aminoacyl-tRNA synthetase</keyword>
<keyword id="KW-0067">ATP-binding</keyword>
<keyword id="KW-0963">Cytoplasm</keyword>
<keyword id="KW-0436">Ligase</keyword>
<keyword id="KW-0547">Nucleotide-binding</keyword>
<keyword id="KW-0648">Protein biosynthesis</keyword>
<keyword id="KW-1185">Reference proteome</keyword>